<name>PDXH_SHESM</name>
<evidence type="ECO:0000255" key="1">
    <source>
        <dbReference type="HAMAP-Rule" id="MF_01629"/>
    </source>
</evidence>
<comment type="function">
    <text evidence="1">Catalyzes the oxidation of either pyridoxine 5'-phosphate (PNP) or pyridoxamine 5'-phosphate (PMP) into pyridoxal 5'-phosphate (PLP).</text>
</comment>
<comment type="catalytic activity">
    <reaction evidence="1">
        <text>pyridoxamine 5'-phosphate + O2 + H2O = pyridoxal 5'-phosphate + H2O2 + NH4(+)</text>
        <dbReference type="Rhea" id="RHEA:15817"/>
        <dbReference type="ChEBI" id="CHEBI:15377"/>
        <dbReference type="ChEBI" id="CHEBI:15379"/>
        <dbReference type="ChEBI" id="CHEBI:16240"/>
        <dbReference type="ChEBI" id="CHEBI:28938"/>
        <dbReference type="ChEBI" id="CHEBI:58451"/>
        <dbReference type="ChEBI" id="CHEBI:597326"/>
        <dbReference type="EC" id="1.4.3.5"/>
    </reaction>
</comment>
<comment type="catalytic activity">
    <reaction evidence="1">
        <text>pyridoxine 5'-phosphate + O2 = pyridoxal 5'-phosphate + H2O2</text>
        <dbReference type="Rhea" id="RHEA:15149"/>
        <dbReference type="ChEBI" id="CHEBI:15379"/>
        <dbReference type="ChEBI" id="CHEBI:16240"/>
        <dbReference type="ChEBI" id="CHEBI:58589"/>
        <dbReference type="ChEBI" id="CHEBI:597326"/>
        <dbReference type="EC" id="1.4.3.5"/>
    </reaction>
</comment>
<comment type="cofactor">
    <cofactor evidence="1">
        <name>FMN</name>
        <dbReference type="ChEBI" id="CHEBI:58210"/>
    </cofactor>
    <text evidence="1">Binds 1 FMN per subunit.</text>
</comment>
<comment type="pathway">
    <text evidence="1">Cofactor metabolism; pyridoxal 5'-phosphate salvage; pyridoxal 5'-phosphate from pyridoxamine 5'-phosphate: step 1/1.</text>
</comment>
<comment type="pathway">
    <text evidence="1">Cofactor metabolism; pyridoxal 5'-phosphate salvage; pyridoxal 5'-phosphate from pyridoxine 5'-phosphate: step 1/1.</text>
</comment>
<comment type="subunit">
    <text evidence="1">Homodimer.</text>
</comment>
<comment type="similarity">
    <text evidence="1">Belongs to the pyridoxamine 5'-phosphate oxidase family.</text>
</comment>
<proteinExistence type="inferred from homology"/>
<keyword id="KW-0285">Flavoprotein</keyword>
<keyword id="KW-0288">FMN</keyword>
<keyword id="KW-0560">Oxidoreductase</keyword>
<keyword id="KW-0664">Pyridoxine biosynthesis</keyword>
<sequence>MTDLSDIRREYTKGGLRRADLPQNPMQLFELWMTQARDAELSDPTAMCVATVDEHGQPYQRIVLLKRFDDSGFVFFTNLGSRKAQQIAANNKVSLHFPWHPIERQVSILGEAQPLSTAEVLKYFMTRPKDSQIAAWVSQQSSKLSARQVLEGKFFEMKAKFAKGDVPLPSFWGGYLVKPSSIEFWQGGEHRLHDRFLYTRQADEWVIDRLAP</sequence>
<gene>
    <name evidence="1" type="primary">pdxH</name>
    <name type="ordered locus">Shewmr4_1559</name>
</gene>
<feature type="chain" id="PRO_0000292330" description="Pyridoxine/pyridoxamine 5'-phosphate oxidase">
    <location>
        <begin position="1"/>
        <end position="212"/>
    </location>
</feature>
<feature type="binding site" evidence="1">
    <location>
        <begin position="8"/>
        <end position="11"/>
    </location>
    <ligand>
        <name>substrate</name>
    </ligand>
</feature>
<feature type="binding site" evidence="1">
    <location>
        <begin position="61"/>
        <end position="66"/>
    </location>
    <ligand>
        <name>FMN</name>
        <dbReference type="ChEBI" id="CHEBI:58210"/>
    </ligand>
</feature>
<feature type="binding site" evidence="1">
    <location>
        <position position="66"/>
    </location>
    <ligand>
        <name>substrate</name>
    </ligand>
</feature>
<feature type="binding site" evidence="1">
    <location>
        <begin position="76"/>
        <end position="77"/>
    </location>
    <ligand>
        <name>FMN</name>
        <dbReference type="ChEBI" id="CHEBI:58210"/>
    </ligand>
</feature>
<feature type="binding site" evidence="1">
    <location>
        <position position="82"/>
    </location>
    <ligand>
        <name>FMN</name>
        <dbReference type="ChEBI" id="CHEBI:58210"/>
    </ligand>
</feature>
<feature type="binding site" evidence="1">
    <location>
        <position position="83"/>
    </location>
    <ligand>
        <name>FMN</name>
        <dbReference type="ChEBI" id="CHEBI:58210"/>
    </ligand>
</feature>
<feature type="binding site" evidence="1">
    <location>
        <position position="105"/>
    </location>
    <ligand>
        <name>FMN</name>
        <dbReference type="ChEBI" id="CHEBI:58210"/>
    </ligand>
</feature>
<feature type="binding site" evidence="1">
    <location>
        <position position="123"/>
    </location>
    <ligand>
        <name>substrate</name>
    </ligand>
</feature>
<feature type="binding site" evidence="1">
    <location>
        <position position="127"/>
    </location>
    <ligand>
        <name>substrate</name>
    </ligand>
</feature>
<feature type="binding site" evidence="1">
    <location>
        <position position="131"/>
    </location>
    <ligand>
        <name>substrate</name>
    </ligand>
</feature>
<feature type="binding site" evidence="1">
    <location>
        <begin position="140"/>
        <end position="141"/>
    </location>
    <ligand>
        <name>FMN</name>
        <dbReference type="ChEBI" id="CHEBI:58210"/>
    </ligand>
</feature>
<feature type="binding site" evidence="1">
    <location>
        <position position="185"/>
    </location>
    <ligand>
        <name>FMN</name>
        <dbReference type="ChEBI" id="CHEBI:58210"/>
    </ligand>
</feature>
<feature type="binding site" evidence="1">
    <location>
        <begin position="191"/>
        <end position="193"/>
    </location>
    <ligand>
        <name>substrate</name>
    </ligand>
</feature>
<feature type="binding site" evidence="1">
    <location>
        <position position="195"/>
    </location>
    <ligand>
        <name>FMN</name>
        <dbReference type="ChEBI" id="CHEBI:58210"/>
    </ligand>
</feature>
<accession>Q0HJY0</accession>
<organism>
    <name type="scientific">Shewanella sp. (strain MR-4)</name>
    <dbReference type="NCBI Taxonomy" id="60480"/>
    <lineage>
        <taxon>Bacteria</taxon>
        <taxon>Pseudomonadati</taxon>
        <taxon>Pseudomonadota</taxon>
        <taxon>Gammaproteobacteria</taxon>
        <taxon>Alteromonadales</taxon>
        <taxon>Shewanellaceae</taxon>
        <taxon>Shewanella</taxon>
    </lineage>
</organism>
<reference key="1">
    <citation type="submission" date="2006-08" db="EMBL/GenBank/DDBJ databases">
        <title>Complete sequence of Shewanella sp. MR-4.</title>
        <authorList>
            <consortium name="US DOE Joint Genome Institute"/>
            <person name="Copeland A."/>
            <person name="Lucas S."/>
            <person name="Lapidus A."/>
            <person name="Barry K."/>
            <person name="Detter J.C."/>
            <person name="Glavina del Rio T."/>
            <person name="Hammon N."/>
            <person name="Israni S."/>
            <person name="Dalin E."/>
            <person name="Tice H."/>
            <person name="Pitluck S."/>
            <person name="Kiss H."/>
            <person name="Brettin T."/>
            <person name="Bruce D."/>
            <person name="Han C."/>
            <person name="Tapia R."/>
            <person name="Gilna P."/>
            <person name="Schmutz J."/>
            <person name="Larimer F."/>
            <person name="Land M."/>
            <person name="Hauser L."/>
            <person name="Kyrpides N."/>
            <person name="Mikhailova N."/>
            <person name="Nealson K."/>
            <person name="Konstantinidis K."/>
            <person name="Klappenbach J."/>
            <person name="Tiedje J."/>
            <person name="Richardson P."/>
        </authorList>
    </citation>
    <scope>NUCLEOTIDE SEQUENCE [LARGE SCALE GENOMIC DNA]</scope>
    <source>
        <strain>MR-4</strain>
    </source>
</reference>
<dbReference type="EC" id="1.4.3.5" evidence="1"/>
<dbReference type="EMBL" id="CP000446">
    <property type="protein sequence ID" value="ABI38637.1"/>
    <property type="molecule type" value="Genomic_DNA"/>
</dbReference>
<dbReference type="RefSeq" id="WP_011622340.1">
    <property type="nucleotide sequence ID" value="NC_008321.1"/>
</dbReference>
<dbReference type="SMR" id="Q0HJY0"/>
<dbReference type="KEGG" id="she:Shewmr4_1559"/>
<dbReference type="HOGENOM" id="CLU_032263_2_2_6"/>
<dbReference type="UniPathway" id="UPA01068">
    <property type="reaction ID" value="UER00304"/>
</dbReference>
<dbReference type="UniPathway" id="UPA01068">
    <property type="reaction ID" value="UER00305"/>
</dbReference>
<dbReference type="GO" id="GO:0010181">
    <property type="term" value="F:FMN binding"/>
    <property type="evidence" value="ECO:0007669"/>
    <property type="project" value="UniProtKB-UniRule"/>
</dbReference>
<dbReference type="GO" id="GO:0004733">
    <property type="term" value="F:pyridoxamine phosphate oxidase activity"/>
    <property type="evidence" value="ECO:0007669"/>
    <property type="project" value="UniProtKB-UniRule"/>
</dbReference>
<dbReference type="GO" id="GO:0008615">
    <property type="term" value="P:pyridoxine biosynthetic process"/>
    <property type="evidence" value="ECO:0007669"/>
    <property type="project" value="UniProtKB-KW"/>
</dbReference>
<dbReference type="FunFam" id="2.30.110.10:FF:000001">
    <property type="entry name" value="Pyridoxine/pyridoxamine 5'-phosphate oxidase"/>
    <property type="match status" value="1"/>
</dbReference>
<dbReference type="Gene3D" id="2.30.110.10">
    <property type="entry name" value="Electron Transport, Fmn-binding Protein, Chain A"/>
    <property type="match status" value="1"/>
</dbReference>
<dbReference type="HAMAP" id="MF_01629">
    <property type="entry name" value="PdxH"/>
    <property type="match status" value="1"/>
</dbReference>
<dbReference type="InterPro" id="IPR000659">
    <property type="entry name" value="Pyridox_Oxase"/>
</dbReference>
<dbReference type="InterPro" id="IPR019740">
    <property type="entry name" value="Pyridox_Oxase_CS"/>
</dbReference>
<dbReference type="InterPro" id="IPR011576">
    <property type="entry name" value="Pyridox_Oxase_N"/>
</dbReference>
<dbReference type="InterPro" id="IPR019576">
    <property type="entry name" value="Pyridoxamine_oxidase_dimer_C"/>
</dbReference>
<dbReference type="InterPro" id="IPR012349">
    <property type="entry name" value="Split_barrel_FMN-bd"/>
</dbReference>
<dbReference type="NCBIfam" id="TIGR00558">
    <property type="entry name" value="pdxH"/>
    <property type="match status" value="1"/>
</dbReference>
<dbReference type="NCBIfam" id="NF004231">
    <property type="entry name" value="PRK05679.1"/>
    <property type="match status" value="1"/>
</dbReference>
<dbReference type="PANTHER" id="PTHR10851:SF0">
    <property type="entry name" value="PYRIDOXINE-5'-PHOSPHATE OXIDASE"/>
    <property type="match status" value="1"/>
</dbReference>
<dbReference type="PANTHER" id="PTHR10851">
    <property type="entry name" value="PYRIDOXINE-5-PHOSPHATE OXIDASE"/>
    <property type="match status" value="1"/>
</dbReference>
<dbReference type="Pfam" id="PF10590">
    <property type="entry name" value="PNP_phzG_C"/>
    <property type="match status" value="1"/>
</dbReference>
<dbReference type="Pfam" id="PF01243">
    <property type="entry name" value="PNPOx_N"/>
    <property type="match status" value="1"/>
</dbReference>
<dbReference type="PIRSF" id="PIRSF000190">
    <property type="entry name" value="Pyd_amn-ph_oxd"/>
    <property type="match status" value="1"/>
</dbReference>
<dbReference type="SUPFAM" id="SSF50475">
    <property type="entry name" value="FMN-binding split barrel"/>
    <property type="match status" value="1"/>
</dbReference>
<dbReference type="PROSITE" id="PS01064">
    <property type="entry name" value="PYRIDOX_OXIDASE"/>
    <property type="match status" value="1"/>
</dbReference>
<protein>
    <recommendedName>
        <fullName evidence="1">Pyridoxine/pyridoxamine 5'-phosphate oxidase</fullName>
        <ecNumber evidence="1">1.4.3.5</ecNumber>
    </recommendedName>
    <alternativeName>
        <fullName evidence="1">PNP/PMP oxidase</fullName>
        <shortName evidence="1">PNPOx</shortName>
    </alternativeName>
    <alternativeName>
        <fullName evidence="1">Pyridoxal 5'-phosphate synthase</fullName>
    </alternativeName>
</protein>